<accession>Q95017</accession>
<accession>Q9GYI5</accession>
<gene>
    <name evidence="17" type="primary">ubc-9</name>
    <name evidence="17" type="ORF">F29B9.6</name>
</gene>
<reference key="1">
    <citation type="submission" date="1998-11" db="EMBL/GenBank/DDBJ databases">
        <title>Ubc-9 of Caenorhabditis elegans: identification, characterization and interaction with smt-3.</title>
        <authorList>
            <person name="Li T."/>
            <person name="Sun B."/>
            <person name="Lee M.-K."/>
            <person name="Teo T.-S."/>
        </authorList>
    </citation>
    <scope>NUCLEOTIDE SEQUENCE [MRNA]</scope>
    <scope>INTERACTION WITH SMO-1</scope>
    <source>
        <strain>Bristol N2</strain>
    </source>
</reference>
<reference key="2">
    <citation type="journal article" date="1998" name="Science">
        <title>Genome sequence of the nematode C. elegans: a platform for investigating biology.</title>
        <authorList>
            <consortium name="The C. elegans sequencing consortium"/>
        </authorList>
    </citation>
    <scope>NUCLEOTIDE SEQUENCE [LARGE SCALE GENOMIC DNA]</scope>
    <source>
        <strain>Bristol N2</strain>
    </source>
</reference>
<reference key="3">
    <citation type="journal article" date="2002" name="Genome Biol.">
        <title>Functional and phylogenetic analysis of the ubiquitylation system in Caenorhabditis elegans: ubiquitin-conjugating enzymes, ubiquitin-activating enzymes, and ubiquitin-like proteins.</title>
        <authorList>
            <person name="Jones D."/>
            <person name="Crowe E."/>
            <person name="Stevens T.A."/>
            <person name="Candido E.P.M."/>
        </authorList>
    </citation>
    <scope>FUNCTION</scope>
    <scope>INTERACTION WITH SOP-2</scope>
</reference>
<reference key="4">
    <citation type="journal article" date="2004" name="Curr. Biol.">
        <title>BRCA1/BARD1 orthologs required for DNA repair in Caenorhabditis elegans.</title>
        <authorList>
            <person name="Boulton S.J."/>
            <person name="Martin J.S."/>
            <person name="Polanowska J."/>
            <person name="Hill D.E."/>
            <person name="Gartner A."/>
            <person name="Vidal M."/>
        </authorList>
    </citation>
    <scope>FUNCTION</scope>
    <scope>INTERACTION WITH BRD-1 AND RAD-51</scope>
    <scope>DISRUPTION PHENOTYPE</scope>
</reference>
<reference key="5">
    <citation type="journal article" date="2004" name="Nat. Genet.">
        <title>SUMO modification is required for in vivo Hox gene regulation by the Caenorhabditis elegans Polycomb group protein SOP-2.</title>
        <authorList>
            <person name="Zhang H."/>
            <person name="Smolen G.A."/>
            <person name="Palmer R."/>
            <person name="Christoforou A."/>
            <person name="van den Heuvel S."/>
            <person name="Haber D.A."/>
        </authorList>
    </citation>
    <scope>FUNCTION</scope>
</reference>
<reference key="6">
    <citation type="journal article" date="2005" name="Development">
        <title>Sumoylation of LIN-1 promotes transcriptional repression and inhibition of vulval cell fates.</title>
        <authorList>
            <person name="Leight E.R."/>
            <person name="Glossip D."/>
            <person name="Kornfeld K."/>
        </authorList>
    </citation>
    <scope>FUNCTION</scope>
</reference>
<reference key="7">
    <citation type="journal article" date="2005" name="EMBO J.">
        <title>Chromatin regulation and sumoylation in the inhibition of Ras-induced vulval development in Caenorhabditis elegans.</title>
        <authorList>
            <person name="Poulin G."/>
            <person name="Dong Y."/>
            <person name="Fraser A.G."/>
            <person name="Hopper N.A."/>
            <person name="Ahringer J."/>
        </authorList>
    </citation>
    <scope>FUNCTION</scope>
</reference>
<reference key="8">
    <citation type="journal article" date="2006" name="Dev. Biol.">
        <title>The T-box factor TBX-2 and the SUMO conjugating enzyme UBC-9 are required for ABa-derived pharyngeal muscle in C. elegans.</title>
        <authorList>
            <person name="Roy Chowdhuri S."/>
            <person name="Crum T."/>
            <person name="Woollard A."/>
            <person name="Aslam S."/>
            <person name="Okkema P.G."/>
        </authorList>
    </citation>
    <scope>FUNCTION</scope>
</reference>
<reference key="9">
    <citation type="journal article" date="2013" name="PLoS ONE">
        <title>An RNAi-based dimorphic genetic screen identified the double bromodomain protein BET-1 as a sumo-dependent attenuator of RAS-mediated signalling.</title>
        <authorList>
            <person name="Gee F."/>
            <person name="Fisher K."/>
            <person name="Klemstein U."/>
            <person name="Poulin G.B."/>
        </authorList>
    </citation>
    <scope>INTERACTION WITH BET-1</scope>
</reference>
<reference key="10">
    <citation type="journal article" date="2014" name="Int. J. Biochem. Cell Biol.">
        <title>Sumoylation regulates ER stress response by modulating calreticulin gene expression in XBP-1-dependent mode in Caenorhabditis elegans.</title>
        <authorList>
            <person name="Lim Y."/>
            <person name="Lee D."/>
            <person name="Kalichamy K."/>
            <person name="Hong S.E."/>
            <person name="Michalak M."/>
            <person name="Ahnn J."/>
            <person name="Kim D.H."/>
            <person name="Lee S.K."/>
        </authorList>
    </citation>
    <scope>FUNCTION</scope>
    <scope>INTERACTION WITH XBP-1</scope>
    <scope>DEVELOPMENTAL STAGE</scope>
    <scope>DISRUPTION PHENOTYPE</scope>
</reference>
<reference key="11">
    <citation type="journal article" date="2014" name="Nat. Commun.">
        <title>Dynamic SUMO modification regulates mitotic chromosome assembly and cell cycle progression in Caenorhabditis elegans.</title>
        <authorList>
            <person name="Pelisch F."/>
            <person name="Sonneville R."/>
            <person name="Pourkarimi E."/>
            <person name="Agostinho A."/>
            <person name="Blow J.J."/>
            <person name="Gartner A."/>
            <person name="Hay R.T."/>
        </authorList>
    </citation>
    <scope>SUBCELLULAR LOCATION</scope>
    <scope>DISRUPTION PHENOTYPE</scope>
</reference>
<reference key="12">
    <citation type="journal article" date="2015" name="G3 (Bethesda)">
        <title>Caenorhabditis elegans TBX-2 Directly Regulates Its Own Expression in a Negative Autoregulatory Loop.</title>
        <authorList>
            <person name="Milton A.C."/>
            <person name="Okkema P.G."/>
        </authorList>
    </citation>
    <scope>DISRUPTION PHENOTYPE</scope>
</reference>
<reference evidence="16" key="13">
    <citation type="journal article" date="2021" name="Elife">
        <title>PIE-1 SUMOylation promotes germline fates and piRNA-dependent silencing in C. elegans.</title>
        <authorList>
            <person name="Kim H."/>
            <person name="Ding Y.H."/>
            <person name="Lu S."/>
            <person name="Zuo M.Q."/>
            <person name="Tan W."/>
            <person name="Conte D. Jr."/>
            <person name="Dong M.Q."/>
            <person name="Mello C.C."/>
        </authorList>
    </citation>
    <scope>FUNCTION</scope>
    <scope>DISRUPTION PHENOTYPE</scope>
    <scope>MUTAGENESIS OF GLY-56</scope>
</reference>
<reference evidence="16" key="14">
    <citation type="journal article" date="2021" name="Elife">
        <title>HDAC1 SUMOylation promotes Argonaute-directed transcriptional silencing in C. elegans.</title>
        <authorList>
            <person name="Kim H."/>
            <person name="Ding Y.H."/>
            <person name="Zhang G."/>
            <person name="Yan Y.H."/>
            <person name="Conte D. Jr."/>
            <person name="Dong M.Q."/>
            <person name="Mello C.C."/>
        </authorList>
    </citation>
    <scope>DISRUPTION PHENOTYPE</scope>
    <scope>MUTAGENESIS OF GLY-56</scope>
</reference>
<name>UBC9_CAEEL</name>
<feature type="chain" id="PRO_0000082517" description="SUMO-conjugating enzyme UBC9">
    <location>
        <begin position="1"/>
        <end position="166"/>
    </location>
</feature>
<feature type="domain" description="UBC core" evidence="1">
    <location>
        <begin position="4"/>
        <end position="157"/>
    </location>
</feature>
<feature type="active site" description="Glycyl thioester intermediate" evidence="1 2">
    <location>
        <position position="93"/>
    </location>
</feature>
<feature type="mutagenesis site" description="In ne446; temperature-sensitive mutant; produces 100% dead embryos at 25 degrees, exhibits defective body morphology and 15% of arrested embryos have extra intestinal cells. Exhibits defective piRNA mediated silencing at 23 degrees." evidence="13 14">
    <original>G</original>
    <variation>R</variation>
    <location>
        <position position="56"/>
    </location>
</feature>
<organism>
    <name type="scientific">Caenorhabditis elegans</name>
    <dbReference type="NCBI Taxonomy" id="6239"/>
    <lineage>
        <taxon>Eukaryota</taxon>
        <taxon>Metazoa</taxon>
        <taxon>Ecdysozoa</taxon>
        <taxon>Nematoda</taxon>
        <taxon>Chromadorea</taxon>
        <taxon>Rhabditida</taxon>
        <taxon>Rhabditina</taxon>
        <taxon>Rhabditomorpha</taxon>
        <taxon>Rhabditoidea</taxon>
        <taxon>Rhabditidae</taxon>
        <taxon>Peloderinae</taxon>
        <taxon>Caenorhabditis</taxon>
    </lineage>
</organism>
<evidence type="ECO:0000255" key="1">
    <source>
        <dbReference type="PROSITE-ProRule" id="PRU00388"/>
    </source>
</evidence>
<evidence type="ECO:0000255" key="2">
    <source>
        <dbReference type="PROSITE-ProRule" id="PRU10133"/>
    </source>
</evidence>
<evidence type="ECO:0000269" key="3">
    <source>
    </source>
</evidence>
<evidence type="ECO:0000269" key="4">
    <source>
    </source>
</evidence>
<evidence type="ECO:0000269" key="5">
    <source>
    </source>
</evidence>
<evidence type="ECO:0000269" key="6">
    <source>
    </source>
</evidence>
<evidence type="ECO:0000269" key="7">
    <source>
    </source>
</evidence>
<evidence type="ECO:0000269" key="8">
    <source>
    </source>
</evidence>
<evidence type="ECO:0000269" key="9">
    <source>
    </source>
</evidence>
<evidence type="ECO:0000269" key="10">
    <source>
    </source>
</evidence>
<evidence type="ECO:0000269" key="11">
    <source>
    </source>
</evidence>
<evidence type="ECO:0000269" key="12">
    <source>
    </source>
</evidence>
<evidence type="ECO:0000269" key="13">
    <source>
    </source>
</evidence>
<evidence type="ECO:0000269" key="14">
    <source>
    </source>
</evidence>
<evidence type="ECO:0000269" key="15">
    <source ref="1"/>
</evidence>
<evidence type="ECO:0000305" key="16"/>
<evidence type="ECO:0000312" key="17">
    <source>
        <dbReference type="WormBase" id="F29B9.6"/>
    </source>
</evidence>
<dbReference type="EC" id="2.3.2.-"/>
<dbReference type="EMBL" id="AF106565">
    <property type="protein sequence ID" value="AAC97374.1"/>
    <property type="molecule type" value="mRNA"/>
</dbReference>
<dbReference type="EMBL" id="BX284604">
    <property type="protein sequence ID" value="CCD70229.1"/>
    <property type="molecule type" value="Genomic_DNA"/>
</dbReference>
<dbReference type="PIR" id="T29929">
    <property type="entry name" value="T29929"/>
</dbReference>
<dbReference type="RefSeq" id="NP_001023158.1">
    <property type="nucleotide sequence ID" value="NM_001027987.7"/>
</dbReference>
<dbReference type="SMR" id="Q95017"/>
<dbReference type="BioGRID" id="533085">
    <property type="interactions" value="31"/>
</dbReference>
<dbReference type="DIP" id="DIP-25778N"/>
<dbReference type="FunCoup" id="Q95017">
    <property type="interactions" value="3489"/>
</dbReference>
<dbReference type="IntAct" id="Q95017">
    <property type="interactions" value="10"/>
</dbReference>
<dbReference type="MINT" id="Q95017"/>
<dbReference type="STRING" id="6239.F29B9.6.2"/>
<dbReference type="MoonDB" id="Q95017">
    <property type="type" value="Predicted"/>
</dbReference>
<dbReference type="PaxDb" id="6239-F29B9.6"/>
<dbReference type="PeptideAtlas" id="Q95017"/>
<dbReference type="EnsemblMetazoa" id="F29B9.6.1">
    <property type="protein sequence ID" value="F29B9.6.1"/>
    <property type="gene ID" value="WBGene00006706"/>
</dbReference>
<dbReference type="GeneID" id="3565767"/>
<dbReference type="KEGG" id="cel:CELE_F29B9.6"/>
<dbReference type="UCSC" id="F29B9.6.1">
    <property type="organism name" value="c. elegans"/>
</dbReference>
<dbReference type="AGR" id="WB:WBGene00006706"/>
<dbReference type="CTD" id="3565767"/>
<dbReference type="WormBase" id="F29B9.6">
    <property type="protein sequence ID" value="CE09784"/>
    <property type="gene ID" value="WBGene00006706"/>
    <property type="gene designation" value="ubc-9"/>
</dbReference>
<dbReference type="eggNOG" id="KOG0424">
    <property type="taxonomic scope" value="Eukaryota"/>
</dbReference>
<dbReference type="GeneTree" id="ENSGT00550000075088"/>
<dbReference type="HOGENOM" id="CLU_030988_12_0_1"/>
<dbReference type="InParanoid" id="Q95017"/>
<dbReference type="OMA" id="TWECGIP"/>
<dbReference type="OrthoDB" id="6600758at2759"/>
<dbReference type="PhylomeDB" id="Q95017"/>
<dbReference type="Reactome" id="R-CEL-3065678">
    <property type="pathway name" value="SUMO is transferred from E1 to E2 (UBE2I, UBC9)"/>
</dbReference>
<dbReference type="Reactome" id="R-CEL-3108214">
    <property type="pathway name" value="SUMOylation of DNA damage response and repair proteins"/>
</dbReference>
<dbReference type="Reactome" id="R-CEL-3232118">
    <property type="pathway name" value="SUMOylation of transcription factors"/>
</dbReference>
<dbReference type="Reactome" id="R-CEL-3232142">
    <property type="pathway name" value="SUMOylation of ubiquitinylation proteins"/>
</dbReference>
<dbReference type="Reactome" id="R-CEL-3899300">
    <property type="pathway name" value="SUMOylation of transcription cofactors"/>
</dbReference>
<dbReference type="Reactome" id="R-CEL-4085377">
    <property type="pathway name" value="SUMOylation of SUMOylation proteins"/>
</dbReference>
<dbReference type="Reactome" id="R-CEL-4090294">
    <property type="pathway name" value="SUMOylation of intracellular receptors"/>
</dbReference>
<dbReference type="Reactome" id="R-CEL-4551638">
    <property type="pathway name" value="SUMOylation of chromatin organization proteins"/>
</dbReference>
<dbReference type="Reactome" id="R-CEL-4570464">
    <property type="pathway name" value="SUMOylation of RNA binding proteins"/>
</dbReference>
<dbReference type="Reactome" id="R-CEL-4615885">
    <property type="pathway name" value="SUMOylation of DNA replication proteins"/>
</dbReference>
<dbReference type="Reactome" id="R-CEL-5696395">
    <property type="pathway name" value="Formation of Incision Complex in GG-NER"/>
</dbReference>
<dbReference type="Reactome" id="R-CEL-8866904">
    <property type="pathway name" value="Negative regulation of activity of TFAP2 (AP-2) family transcription factors"/>
</dbReference>
<dbReference type="Reactome" id="R-CEL-9615933">
    <property type="pathway name" value="Postmitotic nuclear pore complex (NPC) reformation"/>
</dbReference>
<dbReference type="Reactome" id="R-CEL-9793242">
    <property type="pathway name" value="SUMOylation of nuclear envelope proteins"/>
</dbReference>
<dbReference type="Reactome" id="R-CEL-9856649">
    <property type="pathway name" value="Transcriptional and post-translational regulation of MITF-M expression and activity"/>
</dbReference>
<dbReference type="SignaLink" id="Q95017"/>
<dbReference type="UniPathway" id="UPA00886"/>
<dbReference type="PRO" id="PR:Q95017"/>
<dbReference type="Proteomes" id="UP000001940">
    <property type="component" value="Chromosome IV"/>
</dbReference>
<dbReference type="Bgee" id="WBGene00006706">
    <property type="expression patterns" value="Expressed in embryo and 4 other cell types or tissues"/>
</dbReference>
<dbReference type="GO" id="GO:0005635">
    <property type="term" value="C:nuclear envelope"/>
    <property type="evidence" value="ECO:0007669"/>
    <property type="project" value="UniProtKB-SubCell"/>
</dbReference>
<dbReference type="GO" id="GO:0005634">
    <property type="term" value="C:nucleus"/>
    <property type="evidence" value="ECO:0000318"/>
    <property type="project" value="GO_Central"/>
</dbReference>
<dbReference type="GO" id="GO:0005524">
    <property type="term" value="F:ATP binding"/>
    <property type="evidence" value="ECO:0007669"/>
    <property type="project" value="UniProtKB-KW"/>
</dbReference>
<dbReference type="GO" id="GO:0061629">
    <property type="term" value="F:RNA polymerase II-specific DNA-binding transcription factor binding"/>
    <property type="evidence" value="ECO:0000353"/>
    <property type="project" value="WormBase"/>
</dbReference>
<dbReference type="GO" id="GO:0032093">
    <property type="term" value="F:SAM domain binding"/>
    <property type="evidence" value="ECO:0000353"/>
    <property type="project" value="WormBase"/>
</dbReference>
<dbReference type="GO" id="GO:0061656">
    <property type="term" value="F:SUMO conjugating enzyme activity"/>
    <property type="evidence" value="ECO:0000314"/>
    <property type="project" value="WormBase"/>
</dbReference>
<dbReference type="GO" id="GO:0009952">
    <property type="term" value="P:anterior/posterior pattern specification"/>
    <property type="evidence" value="ECO:0000315"/>
    <property type="project" value="WormBase"/>
</dbReference>
<dbReference type="GO" id="GO:0009792">
    <property type="term" value="P:embryo development ending in birth or egg hatching"/>
    <property type="evidence" value="ECO:0000315"/>
    <property type="project" value="WormBase"/>
</dbReference>
<dbReference type="GO" id="GO:0000122">
    <property type="term" value="P:negative regulation of transcription by RNA polymerase II"/>
    <property type="evidence" value="ECO:0000315"/>
    <property type="project" value="WormBase"/>
</dbReference>
<dbReference type="GO" id="GO:0002119">
    <property type="term" value="P:nematode larval development"/>
    <property type="evidence" value="ECO:0000315"/>
    <property type="project" value="WormBase"/>
</dbReference>
<dbReference type="GO" id="GO:0160096">
    <property type="term" value="P:nematode pharyngeal muscle development"/>
    <property type="evidence" value="ECO:0000315"/>
    <property type="project" value="WormBase"/>
</dbReference>
<dbReference type="GO" id="GO:0016925">
    <property type="term" value="P:protein sumoylation"/>
    <property type="evidence" value="ECO:0000314"/>
    <property type="project" value="WormBase"/>
</dbReference>
<dbReference type="GO" id="GO:0032880">
    <property type="term" value="P:regulation of protein localization"/>
    <property type="evidence" value="ECO:0000315"/>
    <property type="project" value="WormBase"/>
</dbReference>
<dbReference type="CDD" id="cd23798">
    <property type="entry name" value="UBCc_UBE2I"/>
    <property type="match status" value="1"/>
</dbReference>
<dbReference type="FunFam" id="3.10.110.10:FF:000013">
    <property type="entry name" value="SUMO-conjugating enzyme UBC9"/>
    <property type="match status" value="1"/>
</dbReference>
<dbReference type="Gene3D" id="3.10.110.10">
    <property type="entry name" value="Ubiquitin Conjugating Enzyme"/>
    <property type="match status" value="1"/>
</dbReference>
<dbReference type="InterPro" id="IPR050113">
    <property type="entry name" value="Ub_conjugating_enzyme"/>
</dbReference>
<dbReference type="InterPro" id="IPR000608">
    <property type="entry name" value="UBQ-conjugat_E2_core"/>
</dbReference>
<dbReference type="InterPro" id="IPR023313">
    <property type="entry name" value="UBQ-conjugating_AS"/>
</dbReference>
<dbReference type="InterPro" id="IPR016135">
    <property type="entry name" value="UBQ-conjugating_enzyme/RWD"/>
</dbReference>
<dbReference type="PANTHER" id="PTHR24067">
    <property type="entry name" value="UBIQUITIN-CONJUGATING ENZYME E2"/>
    <property type="match status" value="1"/>
</dbReference>
<dbReference type="Pfam" id="PF00179">
    <property type="entry name" value="UQ_con"/>
    <property type="match status" value="1"/>
</dbReference>
<dbReference type="SMART" id="SM00212">
    <property type="entry name" value="UBCc"/>
    <property type="match status" value="1"/>
</dbReference>
<dbReference type="SUPFAM" id="SSF54495">
    <property type="entry name" value="UBC-like"/>
    <property type="match status" value="1"/>
</dbReference>
<dbReference type="PROSITE" id="PS00183">
    <property type="entry name" value="UBC_1"/>
    <property type="match status" value="1"/>
</dbReference>
<dbReference type="PROSITE" id="PS50127">
    <property type="entry name" value="UBC_2"/>
    <property type="match status" value="1"/>
</dbReference>
<comment type="function">
    <text evidence="3 4 5 6 7 8 10 14">Accepts the ubiquitin-like protein smo-1 from the aos-1-uba-2 E1 complex and catalyzes its covalent attachment to other proteins with the help of an E3 ligase such as gei-17. Required to sumoylate the ETS transcription factor lin-1, Polycomb protein sop-2, and intermediate filament proteins, such as ifb-1 (PubMed:15107848, PubMed:15689373, PubMed:24933177). Required for embryonic development, fertility, vulval morphogenesis, inhibition of vulval cell fates, lifespan, and neuromuscular activity.</text>
</comment>
<comment type="pathway">
    <text>Protein modification; protein sumoylation.</text>
</comment>
<comment type="subunit">
    <text evidence="4 9 10 15">Interacts with brd-1 and rad-51 (PubMed:14711411). Interacts with smo-1 and sop-2 (PubMed:15107848, Ref.1). Interacts with bet-1 (via BROMO domain 2) (PubMed:24349540). Interacts with isoforms 1 and 2 of X-box-binding protein xbp-1.</text>
</comment>
<comment type="interaction">
    <interactant intactId="EBI-328938">
        <id>Q95017</id>
    </interactant>
    <interactant intactId="EBI-3895480">
        <id>Q21209</id>
        <label>brd-1</label>
    </interactant>
    <organismsDiffer>false</organismsDiffer>
    <experiments>4</experiments>
</comment>
<comment type="interaction">
    <interactant intactId="EBI-328938">
        <id>Q95017</id>
    </interactant>
    <interactant intactId="EBI-321895">
        <id>Q95Q25</id>
        <label>rad-51</label>
    </interactant>
    <organismsDiffer>false</organismsDiffer>
    <experiments>4</experiments>
</comment>
<comment type="interaction">
    <interactant intactId="EBI-328938">
        <id>Q95017</id>
    </interactant>
    <interactant intactId="EBI-313647">
        <id>P55853</id>
        <label>smo-1</label>
    </interactant>
    <organismsDiffer>false</organismsDiffer>
    <experiments>5</experiments>
</comment>
<comment type="subcellular location">
    <subcellularLocation>
        <location evidence="11">Nucleus envelope</location>
    </subcellularLocation>
</comment>
<comment type="developmental stage">
    <text evidence="10">Ubiquitously expressed throughout development (at protein level) (PubMed:24933177). Expressed in early embryos in utero, in the pharynx and body-wall muscles during larval stages, becoming prominent in coelomocytes and the male tail in young adults (PubMed:24933177).</text>
</comment>
<comment type="disruption phenotype">
    <text evidence="4 10 11 12 13 14">RNAi-mediated knockdown results in sterility, embryonic lethality and sensitivity to radiation (PubMed:14711411, PubMed:25873636). RNAi-mediated knockdown causes a number of defects during the first embryonic mitotic division including loss of smo-1 from metaphase chromosomes, chromosome misalignment at metaphase, diminished spindle pole separation, slow chromosome segregation, decreased distance between chromosomes afer anaphase onset and increased air-2 levels in the spindle midzone (PubMed:25475837). RNAi-mediated knockdown results in ectopic tbx-2 expression in seam cells, the gut and in the syncytial hypodermis (PubMed:25873636). Exhibits abnormal localization and structure of intermediate filament protein ifb-1, such as altered filaments and aggregates, resulting in elongation defects of embryos. RNAi-mediated knockdown results in 100% embryonic arrest with 13% having extra intestinal cells, which increases to 73% in pie-1 mutant background (PubMed:34003111). RNAi-mediated knockdown results in defective piRNA-mediated silencing (PubMed:34003109).</text>
</comment>
<comment type="similarity">
    <text evidence="1">Belongs to the ubiquitin-conjugating enzyme family.</text>
</comment>
<keyword id="KW-0067">ATP-binding</keyword>
<keyword id="KW-0217">Developmental protein</keyword>
<keyword id="KW-0547">Nucleotide-binding</keyword>
<keyword id="KW-0539">Nucleus</keyword>
<keyword id="KW-1185">Reference proteome</keyword>
<keyword id="KW-0808">Transferase</keyword>
<keyword id="KW-0833">Ubl conjugation pathway</keyword>
<protein>
    <recommendedName>
        <fullName>SUMO-conjugating enzyme UBC9</fullName>
        <ecNumber>2.3.2.-</ecNumber>
    </recommendedName>
    <alternativeName>
        <fullName>RING-type E3 SUMO transferase UBC9</fullName>
    </alternativeName>
    <alternativeName>
        <fullName>SUMO-protein ligase</fullName>
    </alternativeName>
    <alternativeName>
        <fullName>Ubiquitin carrier protein 9</fullName>
    </alternativeName>
    <alternativeName>
        <fullName>Ubiquitin-conjugating enzyme E2 9</fullName>
    </alternativeName>
    <alternativeName>
        <fullName>Ubiquitin-protein ligase 9</fullName>
    </alternativeName>
</protein>
<proteinExistence type="evidence at protein level"/>
<sequence length="166" mass="19115">MSGIAAGRLAEERKHWRKDHPFGFIAKPVKNADGTLNLFNWECAIPGRKDTIWEGGLYRIRMLFKDDFPSTPPKCKFEPPLFHPNVYPSGTVCLSLLDENKDWKPSISIKQLLIGIQDLLNHPNIEDPAQAEAYQIYCQNRAEYEKRVKKEAVKYAAELVQKQMLE</sequence>